<accession>A1V2L9</accession>
<evidence type="ECO:0000255" key="1">
    <source>
        <dbReference type="HAMAP-Rule" id="MF_01358"/>
    </source>
</evidence>
<protein>
    <recommendedName>
        <fullName evidence="1">NADH-quinone oxidoreductase subunit D</fullName>
        <ecNumber evidence="1">7.1.1.-</ecNumber>
    </recommendedName>
    <alternativeName>
        <fullName evidence="1">NADH dehydrogenase I subunit D</fullName>
    </alternativeName>
    <alternativeName>
        <fullName evidence="1">NDH-1 subunit D</fullName>
    </alternativeName>
</protein>
<sequence>MAEIKNYTLNFGPQHPAAHGVLRLVLELDGEVIQRADPHIGLLHRATEKLAENKTFIQSVPYMDRLDYVSMMVNEHGYVLAIEKLLGIEVPERAQYIRVLFDEITRVLNHLMWIGAHALDVGAMAVFLYAFREREDLMDVYEAVSGARMHAAYYRPGGVYRDLPEAMPQYKASKIRNERALAKMNEARSGSVLDFIDDFFTRFPKCVDEYETLLTDNRIWKQRLVGIGVVSPERALQLGLTGPMIRGSGIAWDLRKKQPYEVYDRLDFDIPVGVNGDCYDRYLVRVEEMRQSTRIAKQCIEWLRKNPGPVITDNHKVAPPSRVGMKTNMEDLIHHFKLFTEGFHVPEGETYAAVEHPKGEFGIYLVSDGANKPYRLKIRAPGYAHLSALDEMARGHMIADAVTIIGTQDIVFGEIDR</sequence>
<reference key="1">
    <citation type="journal article" date="2010" name="Genome Biol. Evol.">
        <title>Continuing evolution of Burkholderia mallei through genome reduction and large-scale rearrangements.</title>
        <authorList>
            <person name="Losada L."/>
            <person name="Ronning C.M."/>
            <person name="DeShazer D."/>
            <person name="Woods D."/>
            <person name="Fedorova N."/>
            <person name="Kim H.S."/>
            <person name="Shabalina S.A."/>
            <person name="Pearson T.R."/>
            <person name="Brinkac L."/>
            <person name="Tan P."/>
            <person name="Nandi T."/>
            <person name="Crabtree J."/>
            <person name="Badger J."/>
            <person name="Beckstrom-Sternberg S."/>
            <person name="Saqib M."/>
            <person name="Schutzer S.E."/>
            <person name="Keim P."/>
            <person name="Nierman W.C."/>
        </authorList>
    </citation>
    <scope>NUCLEOTIDE SEQUENCE [LARGE SCALE GENOMIC DNA]</scope>
    <source>
        <strain>SAVP1</strain>
    </source>
</reference>
<gene>
    <name evidence="1" type="primary">nuoD</name>
    <name type="ordered locus">BMASAVP1_A1133</name>
</gene>
<keyword id="KW-0997">Cell inner membrane</keyword>
<keyword id="KW-1003">Cell membrane</keyword>
<keyword id="KW-0472">Membrane</keyword>
<keyword id="KW-0520">NAD</keyword>
<keyword id="KW-0874">Quinone</keyword>
<keyword id="KW-1278">Translocase</keyword>
<keyword id="KW-0813">Transport</keyword>
<keyword id="KW-0830">Ubiquinone</keyword>
<name>NUOD_BURMS</name>
<organism>
    <name type="scientific">Burkholderia mallei (strain SAVP1)</name>
    <dbReference type="NCBI Taxonomy" id="320388"/>
    <lineage>
        <taxon>Bacteria</taxon>
        <taxon>Pseudomonadati</taxon>
        <taxon>Pseudomonadota</taxon>
        <taxon>Betaproteobacteria</taxon>
        <taxon>Burkholderiales</taxon>
        <taxon>Burkholderiaceae</taxon>
        <taxon>Burkholderia</taxon>
        <taxon>pseudomallei group</taxon>
    </lineage>
</organism>
<feature type="chain" id="PRO_0000371831" description="NADH-quinone oxidoreductase subunit D">
    <location>
        <begin position="1"/>
        <end position="417"/>
    </location>
</feature>
<dbReference type="EC" id="7.1.1.-" evidence="1"/>
<dbReference type="EMBL" id="CP000526">
    <property type="protein sequence ID" value="ABM50672.1"/>
    <property type="molecule type" value="Genomic_DNA"/>
</dbReference>
<dbReference type="RefSeq" id="WP_004185833.1">
    <property type="nucleotide sequence ID" value="NC_008785.1"/>
</dbReference>
<dbReference type="SMR" id="A1V2L9"/>
<dbReference type="KEGG" id="bmv:BMASAVP1_A1133"/>
<dbReference type="HOGENOM" id="CLU_015134_1_1_4"/>
<dbReference type="GO" id="GO:0005886">
    <property type="term" value="C:plasma membrane"/>
    <property type="evidence" value="ECO:0007669"/>
    <property type="project" value="UniProtKB-SubCell"/>
</dbReference>
<dbReference type="GO" id="GO:0051287">
    <property type="term" value="F:NAD binding"/>
    <property type="evidence" value="ECO:0007669"/>
    <property type="project" value="InterPro"/>
</dbReference>
<dbReference type="GO" id="GO:0050136">
    <property type="term" value="F:NADH:ubiquinone reductase (non-electrogenic) activity"/>
    <property type="evidence" value="ECO:0007669"/>
    <property type="project" value="UniProtKB-UniRule"/>
</dbReference>
<dbReference type="GO" id="GO:0048038">
    <property type="term" value="F:quinone binding"/>
    <property type="evidence" value="ECO:0007669"/>
    <property type="project" value="UniProtKB-KW"/>
</dbReference>
<dbReference type="FunFam" id="1.10.645.10:FF:000005">
    <property type="entry name" value="NADH-quinone oxidoreductase subunit D"/>
    <property type="match status" value="1"/>
</dbReference>
<dbReference type="Gene3D" id="1.10.645.10">
    <property type="entry name" value="Cytochrome-c3 Hydrogenase, chain B"/>
    <property type="match status" value="1"/>
</dbReference>
<dbReference type="HAMAP" id="MF_01358">
    <property type="entry name" value="NDH1_NuoD"/>
    <property type="match status" value="1"/>
</dbReference>
<dbReference type="InterPro" id="IPR001135">
    <property type="entry name" value="NADH_Q_OxRdtase_suD"/>
</dbReference>
<dbReference type="InterPro" id="IPR014029">
    <property type="entry name" value="NADH_UbQ_OxRdtase_49kDa_CS"/>
</dbReference>
<dbReference type="InterPro" id="IPR022885">
    <property type="entry name" value="NDH1_su_D/H"/>
</dbReference>
<dbReference type="InterPro" id="IPR029014">
    <property type="entry name" value="NiFe-Hase_large"/>
</dbReference>
<dbReference type="NCBIfam" id="TIGR01962">
    <property type="entry name" value="NuoD"/>
    <property type="match status" value="1"/>
</dbReference>
<dbReference type="NCBIfam" id="NF004739">
    <property type="entry name" value="PRK06075.1"/>
    <property type="match status" value="1"/>
</dbReference>
<dbReference type="PANTHER" id="PTHR11993:SF10">
    <property type="entry name" value="NADH DEHYDROGENASE [UBIQUINONE] IRON-SULFUR PROTEIN 2, MITOCHONDRIAL"/>
    <property type="match status" value="1"/>
</dbReference>
<dbReference type="PANTHER" id="PTHR11993">
    <property type="entry name" value="NADH-UBIQUINONE OXIDOREDUCTASE 49 KDA SUBUNIT"/>
    <property type="match status" value="1"/>
</dbReference>
<dbReference type="Pfam" id="PF00346">
    <property type="entry name" value="Complex1_49kDa"/>
    <property type="match status" value="1"/>
</dbReference>
<dbReference type="SUPFAM" id="SSF56762">
    <property type="entry name" value="HydB/Nqo4-like"/>
    <property type="match status" value="1"/>
</dbReference>
<dbReference type="PROSITE" id="PS00535">
    <property type="entry name" value="COMPLEX1_49K"/>
    <property type="match status" value="1"/>
</dbReference>
<comment type="function">
    <text evidence="1">NDH-1 shuttles electrons from NADH, via FMN and iron-sulfur (Fe-S) centers, to quinones in the respiratory chain. The immediate electron acceptor for the enzyme in this species is believed to be ubiquinone. Couples the redox reaction to proton translocation (for every two electrons transferred, four hydrogen ions are translocated across the cytoplasmic membrane), and thus conserves the redox energy in a proton gradient.</text>
</comment>
<comment type="catalytic activity">
    <reaction evidence="1">
        <text>a quinone + NADH + 5 H(+)(in) = a quinol + NAD(+) + 4 H(+)(out)</text>
        <dbReference type="Rhea" id="RHEA:57888"/>
        <dbReference type="ChEBI" id="CHEBI:15378"/>
        <dbReference type="ChEBI" id="CHEBI:24646"/>
        <dbReference type="ChEBI" id="CHEBI:57540"/>
        <dbReference type="ChEBI" id="CHEBI:57945"/>
        <dbReference type="ChEBI" id="CHEBI:132124"/>
    </reaction>
</comment>
<comment type="subunit">
    <text evidence="1">NDH-1 is composed of 14 different subunits. Subunits NuoB, C, D, E, F, and G constitute the peripheral sector of the complex.</text>
</comment>
<comment type="subcellular location">
    <subcellularLocation>
        <location evidence="1">Cell inner membrane</location>
        <topology evidence="1">Peripheral membrane protein</topology>
        <orientation evidence="1">Cytoplasmic side</orientation>
    </subcellularLocation>
</comment>
<comment type="similarity">
    <text evidence="1">Belongs to the complex I 49 kDa subunit family.</text>
</comment>
<proteinExistence type="inferred from homology"/>